<geneLocation type="mitochondrion"/>
<accession>P24951</accession>
<accession>P92473</accession>
<comment type="function">
    <text evidence="2">Component of the ubiquinol-cytochrome c reductase complex (complex III or cytochrome b-c1 complex) that is part of the mitochondrial respiratory chain. The b-c1 complex mediates electron transfer from ubiquinol to cytochrome c. Contributes to the generation of a proton gradient across the mitochondrial membrane that is then used for ATP synthesis.</text>
</comment>
<comment type="cofactor">
    <cofactor evidence="2">
        <name>heme b</name>
        <dbReference type="ChEBI" id="CHEBI:60344"/>
    </cofactor>
    <text evidence="2">Binds 2 heme b groups non-covalently.</text>
</comment>
<comment type="subunit">
    <text evidence="2">The cytochrome bc1 complex contains 3 respiratory subunits (MT-CYB, CYC1 and UQCRFS1), 2 core proteins (UQCRC1 and UQCRC2) and probably 6 low-molecular weight proteins.</text>
</comment>
<comment type="subcellular location">
    <subcellularLocation>
        <location evidence="2">Mitochondrion inner membrane</location>
        <topology evidence="2">Multi-pass membrane protein</topology>
    </subcellularLocation>
</comment>
<comment type="miscellaneous">
    <text evidence="1">Heme 1 (or BL or b562) is low-potential and absorbs at about 562 nm, and heme 2 (or BH or b566) is high-potential and absorbs at about 566 nm.</text>
</comment>
<comment type="similarity">
    <text evidence="3 4">Belongs to the cytochrome b family.</text>
</comment>
<comment type="caution">
    <text evidence="2">The full-length protein contains only eight transmembrane helices, not nine as predicted by bioinformatics tools.</text>
</comment>
<keyword id="KW-0249">Electron transport</keyword>
<keyword id="KW-0349">Heme</keyword>
<keyword id="KW-0408">Iron</keyword>
<keyword id="KW-0472">Membrane</keyword>
<keyword id="KW-0479">Metal-binding</keyword>
<keyword id="KW-0496">Mitochondrion</keyword>
<keyword id="KW-0999">Mitochondrion inner membrane</keyword>
<keyword id="KW-1185">Reference proteome</keyword>
<keyword id="KW-0679">Respiratory chain</keyword>
<keyword id="KW-0812">Transmembrane</keyword>
<keyword id="KW-1133">Transmembrane helix</keyword>
<keyword id="KW-0813">Transport</keyword>
<keyword id="KW-0830">Ubiquinone</keyword>
<dbReference type="EMBL" id="X61010">
    <property type="protein sequence ID" value="CAA43342.1"/>
    <property type="molecule type" value="Genomic_DNA"/>
</dbReference>
<dbReference type="EMBL" id="X00919">
    <property type="protein sequence ID" value="CAA25437.1"/>
    <property type="molecule type" value="Genomic_DNA"/>
</dbReference>
<dbReference type="EMBL" id="Y09469">
    <property type="protein sequence ID" value="CAA70614.1"/>
    <property type="molecule type" value="Genomic_DNA"/>
</dbReference>
<dbReference type="PIR" id="S36011">
    <property type="entry name" value="S36011"/>
</dbReference>
<dbReference type="RefSeq" id="NP_007094.1">
    <property type="nucleotide sequence ID" value="NC_001606.1"/>
</dbReference>
<dbReference type="SMR" id="P24951"/>
<dbReference type="GeneID" id="807761"/>
<dbReference type="KEGG" id="ccar:807761"/>
<dbReference type="CTD" id="4519"/>
<dbReference type="OrthoDB" id="244at2759"/>
<dbReference type="Proteomes" id="UP000694384">
    <property type="component" value="Unplaced"/>
</dbReference>
<dbReference type="Proteomes" id="UP000694427">
    <property type="component" value="Unplaced"/>
</dbReference>
<dbReference type="Proteomes" id="UP000694700">
    <property type="component" value="Unplaced"/>
</dbReference>
<dbReference type="Proteomes" id="UP000694701">
    <property type="component" value="Unplaced"/>
</dbReference>
<dbReference type="Proteomes" id="UP001155660">
    <property type="component" value="Mitochondrion MT"/>
</dbReference>
<dbReference type="GO" id="GO:0005743">
    <property type="term" value="C:mitochondrial inner membrane"/>
    <property type="evidence" value="ECO:0007669"/>
    <property type="project" value="UniProtKB-SubCell"/>
</dbReference>
<dbReference type="GO" id="GO:0045275">
    <property type="term" value="C:respiratory chain complex III"/>
    <property type="evidence" value="ECO:0007669"/>
    <property type="project" value="InterPro"/>
</dbReference>
<dbReference type="GO" id="GO:0046872">
    <property type="term" value="F:metal ion binding"/>
    <property type="evidence" value="ECO:0007669"/>
    <property type="project" value="UniProtKB-KW"/>
</dbReference>
<dbReference type="GO" id="GO:0008121">
    <property type="term" value="F:ubiquinol-cytochrome-c reductase activity"/>
    <property type="evidence" value="ECO:0007669"/>
    <property type="project" value="InterPro"/>
</dbReference>
<dbReference type="GO" id="GO:0006122">
    <property type="term" value="P:mitochondrial electron transport, ubiquinol to cytochrome c"/>
    <property type="evidence" value="ECO:0007669"/>
    <property type="project" value="TreeGrafter"/>
</dbReference>
<dbReference type="CDD" id="cd00290">
    <property type="entry name" value="cytochrome_b_C"/>
    <property type="match status" value="1"/>
</dbReference>
<dbReference type="CDD" id="cd00284">
    <property type="entry name" value="Cytochrome_b_N"/>
    <property type="match status" value="1"/>
</dbReference>
<dbReference type="FunFam" id="1.20.810.10:FF:000002">
    <property type="entry name" value="Cytochrome b"/>
    <property type="match status" value="1"/>
</dbReference>
<dbReference type="Gene3D" id="1.20.810.10">
    <property type="entry name" value="Cytochrome Bc1 Complex, Chain C"/>
    <property type="match status" value="1"/>
</dbReference>
<dbReference type="InterPro" id="IPR005798">
    <property type="entry name" value="Cyt_b/b6_C"/>
</dbReference>
<dbReference type="InterPro" id="IPR036150">
    <property type="entry name" value="Cyt_b/b6_C_sf"/>
</dbReference>
<dbReference type="InterPro" id="IPR005797">
    <property type="entry name" value="Cyt_b/b6_N"/>
</dbReference>
<dbReference type="InterPro" id="IPR027387">
    <property type="entry name" value="Cytb/b6-like_sf"/>
</dbReference>
<dbReference type="InterPro" id="IPR030689">
    <property type="entry name" value="Cytochrome_b"/>
</dbReference>
<dbReference type="InterPro" id="IPR048260">
    <property type="entry name" value="Cytochrome_b_C_euk/bac"/>
</dbReference>
<dbReference type="InterPro" id="IPR048259">
    <property type="entry name" value="Cytochrome_b_N_euk/bac"/>
</dbReference>
<dbReference type="InterPro" id="IPR016174">
    <property type="entry name" value="Di-haem_cyt_TM"/>
</dbReference>
<dbReference type="PANTHER" id="PTHR19271">
    <property type="entry name" value="CYTOCHROME B"/>
    <property type="match status" value="1"/>
</dbReference>
<dbReference type="PANTHER" id="PTHR19271:SF16">
    <property type="entry name" value="CYTOCHROME B"/>
    <property type="match status" value="1"/>
</dbReference>
<dbReference type="Pfam" id="PF00032">
    <property type="entry name" value="Cytochrom_B_C"/>
    <property type="match status" value="1"/>
</dbReference>
<dbReference type="Pfam" id="PF00033">
    <property type="entry name" value="Cytochrome_B"/>
    <property type="match status" value="1"/>
</dbReference>
<dbReference type="PIRSF" id="PIRSF038885">
    <property type="entry name" value="COB"/>
    <property type="match status" value="1"/>
</dbReference>
<dbReference type="SUPFAM" id="SSF81648">
    <property type="entry name" value="a domain/subunit of cytochrome bc1 complex (Ubiquinol-cytochrome c reductase)"/>
    <property type="match status" value="1"/>
</dbReference>
<dbReference type="SUPFAM" id="SSF81342">
    <property type="entry name" value="Transmembrane di-heme cytochromes"/>
    <property type="match status" value="1"/>
</dbReference>
<dbReference type="PROSITE" id="PS51003">
    <property type="entry name" value="CYTB_CTER"/>
    <property type="match status" value="1"/>
</dbReference>
<dbReference type="PROSITE" id="PS51002">
    <property type="entry name" value="CYTB_NTER"/>
    <property type="match status" value="1"/>
</dbReference>
<name>CYB_CYPCA</name>
<feature type="chain" id="PRO_0000060852" description="Cytochrome b">
    <location>
        <begin position="1"/>
        <end position="381"/>
    </location>
</feature>
<feature type="transmembrane region" description="Helical" evidence="2">
    <location>
        <begin position="33"/>
        <end position="53"/>
    </location>
</feature>
<feature type="transmembrane region" description="Helical" evidence="2">
    <location>
        <begin position="77"/>
        <end position="98"/>
    </location>
</feature>
<feature type="transmembrane region" description="Helical" evidence="2">
    <location>
        <begin position="113"/>
        <end position="133"/>
    </location>
</feature>
<feature type="transmembrane region" description="Helical" evidence="2">
    <location>
        <begin position="178"/>
        <end position="198"/>
    </location>
</feature>
<feature type="transmembrane region" description="Helical" evidence="2">
    <location>
        <begin position="226"/>
        <end position="246"/>
    </location>
</feature>
<feature type="transmembrane region" description="Helical" evidence="2">
    <location>
        <begin position="288"/>
        <end position="308"/>
    </location>
</feature>
<feature type="transmembrane region" description="Helical" evidence="2">
    <location>
        <begin position="320"/>
        <end position="340"/>
    </location>
</feature>
<feature type="transmembrane region" description="Helical" evidence="2">
    <location>
        <begin position="347"/>
        <end position="367"/>
    </location>
</feature>
<feature type="binding site" description="axial binding residue" evidence="2">
    <location>
        <position position="83"/>
    </location>
    <ligand>
        <name>heme b</name>
        <dbReference type="ChEBI" id="CHEBI:60344"/>
        <label>b562</label>
    </ligand>
    <ligandPart>
        <name>Fe</name>
        <dbReference type="ChEBI" id="CHEBI:18248"/>
    </ligandPart>
</feature>
<feature type="binding site" description="axial binding residue" evidence="2">
    <location>
        <position position="97"/>
    </location>
    <ligand>
        <name>heme b</name>
        <dbReference type="ChEBI" id="CHEBI:60344"/>
        <label>b566</label>
    </ligand>
    <ligandPart>
        <name>Fe</name>
        <dbReference type="ChEBI" id="CHEBI:18248"/>
    </ligandPart>
</feature>
<feature type="binding site" description="axial binding residue" evidence="2">
    <location>
        <position position="182"/>
    </location>
    <ligand>
        <name>heme b</name>
        <dbReference type="ChEBI" id="CHEBI:60344"/>
        <label>b562</label>
    </ligand>
    <ligandPart>
        <name>Fe</name>
        <dbReference type="ChEBI" id="CHEBI:18248"/>
    </ligandPart>
</feature>
<feature type="binding site" description="axial binding residue" evidence="2">
    <location>
        <position position="196"/>
    </location>
    <ligand>
        <name>heme b</name>
        <dbReference type="ChEBI" id="CHEBI:60344"/>
        <label>b566</label>
    </ligand>
    <ligandPart>
        <name>Fe</name>
        <dbReference type="ChEBI" id="CHEBI:18248"/>
    </ligandPart>
</feature>
<feature type="binding site" evidence="2">
    <location>
        <position position="201"/>
    </location>
    <ligand>
        <name>a ubiquinone</name>
        <dbReference type="ChEBI" id="CHEBI:16389"/>
    </ligand>
</feature>
<feature type="sequence conflict" description="In Ref. 3; CAA70614." evidence="5" ref="3">
    <original>V</original>
    <variation>I</variation>
    <location>
        <position position="118"/>
    </location>
</feature>
<sequence length="381" mass="42812">MASLRKTHPLIKIANDALVDLPTPSNISAWWNFGSLLGLCLITQILTGLFLAMHYTSDISTAFSSVTHICRDVNYGWLIRNVHANGASFFFICIYMHIARGLYYGSYLYKETWNIGVVLLLLVMMTAFVGYVLPWGQMSFWGATVITNLLSAVPYMGDMLVQWIWGGFSVDNATLTRFFAFHFLLPFVIAAATIIHLLFLHETGSNNPIGLNSDADKVSFHPYFSYKDLLGFVIMLLALTLLALFSPNLLGDPENFTPANPLVTPPHIKPEWYFLFAYAILRSIPNKLGGVLALLFSILVLMVVPLLHTSKQRGLTFRPITQFLFWTLVADMIILTWIGGMPVEHPFIIIGQIASVLYFALFLIFMPLAGWLENKALKWAC</sequence>
<evidence type="ECO:0000250" key="1"/>
<evidence type="ECO:0000250" key="2">
    <source>
        <dbReference type="UniProtKB" id="P00157"/>
    </source>
</evidence>
<evidence type="ECO:0000255" key="3">
    <source>
        <dbReference type="PROSITE-ProRule" id="PRU00967"/>
    </source>
</evidence>
<evidence type="ECO:0000255" key="4">
    <source>
        <dbReference type="PROSITE-ProRule" id="PRU00968"/>
    </source>
</evidence>
<evidence type="ECO:0000305" key="5"/>
<proteinExistence type="inferred from homology"/>
<organism>
    <name type="scientific">Cyprinus carpio</name>
    <name type="common">Common carp</name>
    <dbReference type="NCBI Taxonomy" id="7962"/>
    <lineage>
        <taxon>Eukaryota</taxon>
        <taxon>Metazoa</taxon>
        <taxon>Chordata</taxon>
        <taxon>Craniata</taxon>
        <taxon>Vertebrata</taxon>
        <taxon>Euteleostomi</taxon>
        <taxon>Actinopterygii</taxon>
        <taxon>Neopterygii</taxon>
        <taxon>Teleostei</taxon>
        <taxon>Ostariophysi</taxon>
        <taxon>Cypriniformes</taxon>
        <taxon>Cyprinidae</taxon>
        <taxon>Cyprininae</taxon>
        <taxon>Cyprinus</taxon>
    </lineage>
</organism>
<gene>
    <name type="primary">mt-cyb</name>
    <name type="synonym">cob</name>
    <name type="synonym">cytb</name>
    <name type="synonym">mtcyb</name>
</gene>
<reference key="1">
    <citation type="journal article" date="1994" name="J. Mol. Evol.">
        <title>The complete nucleotide sequence and gene organization of carp (Cyprinus carpio) mitochondrial genome.</title>
        <authorList>
            <person name="Chang Y.S."/>
            <person name="Huang F.L."/>
            <person name="Lo T.B."/>
        </authorList>
    </citation>
    <scope>NUCLEOTIDE SEQUENCE [GENOMIC DNA]</scope>
</reference>
<reference key="2">
    <citation type="journal article" date="1984" name="Mol. Gen. Genet.">
        <title>Cloning, physical mapping and genome organization of mitochondrial DNA from Cyprinus carpio oocytes.</title>
        <authorList>
            <person name="Araya A."/>
            <person name="Amthauer R."/>
            <person name="Leon G."/>
            <person name="Krauskopf M."/>
        </authorList>
    </citation>
    <scope>NUCLEOTIDE SEQUENCE [GENOMIC DNA] OF 1-81</scope>
</reference>
<reference key="3">
    <citation type="submission" date="1996-11" db="EMBL/GenBank/DDBJ databases">
        <authorList>
            <person name="Schlee P."/>
            <person name="Fuchs H."/>
            <person name="Blusch J."/>
            <person name="Werner T."/>
            <person name="Rottman O."/>
            <person name="Stein H."/>
        </authorList>
    </citation>
    <scope>NUCLEOTIDE SEQUENCE [GENOMIC DNA] OF 36-135</scope>
</reference>
<protein>
    <recommendedName>
        <fullName>Cytochrome b</fullName>
    </recommendedName>
    <alternativeName>
        <fullName>Complex III subunit 3</fullName>
    </alternativeName>
    <alternativeName>
        <fullName>Complex III subunit III</fullName>
    </alternativeName>
    <alternativeName>
        <fullName>Cytochrome b-c1 complex subunit 3</fullName>
    </alternativeName>
    <alternativeName>
        <fullName>Ubiquinol-cytochrome-c reductase complex cytochrome b subunit</fullName>
    </alternativeName>
</protein>